<organism>
    <name type="scientific">Enterococcus faecalis (strain ATCC 700802 / V583)</name>
    <dbReference type="NCBI Taxonomy" id="226185"/>
    <lineage>
        <taxon>Bacteria</taxon>
        <taxon>Bacillati</taxon>
        <taxon>Bacillota</taxon>
        <taxon>Bacilli</taxon>
        <taxon>Lactobacillales</taxon>
        <taxon>Enterococcaceae</taxon>
        <taxon>Enterococcus</taxon>
    </lineage>
</organism>
<gene>
    <name evidence="1" type="primary">rpsK</name>
    <name type="ordered locus">EF_0232</name>
</gene>
<comment type="function">
    <text evidence="1">Located on the platform of the 30S subunit, it bridges several disparate RNA helices of the 16S rRNA. Forms part of the Shine-Dalgarno cleft in the 70S ribosome.</text>
</comment>
<comment type="subunit">
    <text evidence="1">Part of the 30S ribosomal subunit. Interacts with proteins S7 and S18. Binds to IF-3.</text>
</comment>
<comment type="similarity">
    <text evidence="1">Belongs to the universal ribosomal protein uS11 family.</text>
</comment>
<protein>
    <recommendedName>
        <fullName evidence="1">Small ribosomal subunit protein uS11</fullName>
    </recommendedName>
    <alternativeName>
        <fullName evidence="2">30S ribosomal protein S11</fullName>
    </alternativeName>
</protein>
<sequence length="129" mass="13713">MAAKKVSRKRRVKKNIESGVAHIHSTFNNTIVMITDTHGNALAWSSAGSLGFKGSKKSTPFAAQMAAEAATKVAMEHGLKTVDVTVKGPGSGREAAIRSLQATGLEVTAIRDVTPVPHNGCRPPKRRRV</sequence>
<reference key="1">
    <citation type="journal article" date="2003" name="Science">
        <title>Role of mobile DNA in the evolution of vancomycin-resistant Enterococcus faecalis.</title>
        <authorList>
            <person name="Paulsen I.T."/>
            <person name="Banerjei L."/>
            <person name="Myers G.S.A."/>
            <person name="Nelson K.E."/>
            <person name="Seshadri R."/>
            <person name="Read T.D."/>
            <person name="Fouts D.E."/>
            <person name="Eisen J.A."/>
            <person name="Gill S.R."/>
            <person name="Heidelberg J.F."/>
            <person name="Tettelin H."/>
            <person name="Dodson R.J."/>
            <person name="Umayam L.A."/>
            <person name="Brinkac L.M."/>
            <person name="Beanan M.J."/>
            <person name="Daugherty S.C."/>
            <person name="DeBoy R.T."/>
            <person name="Durkin S.A."/>
            <person name="Kolonay J.F."/>
            <person name="Madupu R."/>
            <person name="Nelson W.C."/>
            <person name="Vamathevan J.J."/>
            <person name="Tran B."/>
            <person name="Upton J."/>
            <person name="Hansen T."/>
            <person name="Shetty J."/>
            <person name="Khouri H.M."/>
            <person name="Utterback T.R."/>
            <person name="Radune D."/>
            <person name="Ketchum K.A."/>
            <person name="Dougherty B.A."/>
            <person name="Fraser C.M."/>
        </authorList>
    </citation>
    <scope>NUCLEOTIDE SEQUENCE [LARGE SCALE GENOMIC DNA]</scope>
    <source>
        <strain>ATCC 700802 / V583</strain>
    </source>
</reference>
<accession>Q839E0</accession>
<proteinExistence type="evidence at protein level"/>
<keyword id="KW-0002">3D-structure</keyword>
<keyword id="KW-1185">Reference proteome</keyword>
<keyword id="KW-0687">Ribonucleoprotein</keyword>
<keyword id="KW-0689">Ribosomal protein</keyword>
<keyword id="KW-0694">RNA-binding</keyword>
<keyword id="KW-0699">rRNA-binding</keyword>
<feature type="chain" id="PRO_0000123147" description="Small ribosomal subunit protein uS11">
    <location>
        <begin position="1"/>
        <end position="129"/>
    </location>
</feature>
<feature type="strand" evidence="3">
    <location>
        <begin position="20"/>
        <end position="24"/>
    </location>
</feature>
<feature type="strand" evidence="3">
    <location>
        <begin position="31"/>
        <end position="35"/>
    </location>
</feature>
<feature type="strand" evidence="3">
    <location>
        <begin position="37"/>
        <end position="39"/>
    </location>
</feature>
<feature type="strand" evidence="3">
    <location>
        <begin position="41"/>
        <end position="46"/>
    </location>
</feature>
<feature type="helix" evidence="3">
    <location>
        <begin position="47"/>
        <end position="50"/>
    </location>
</feature>
<feature type="helix" evidence="3">
    <location>
        <begin position="54"/>
        <end position="58"/>
    </location>
</feature>
<feature type="helix" evidence="3">
    <location>
        <begin position="60"/>
        <end position="74"/>
    </location>
</feature>
<feature type="strand" evidence="3">
    <location>
        <begin position="81"/>
        <end position="86"/>
    </location>
</feature>
<feature type="helix" evidence="3">
    <location>
        <begin position="93"/>
        <end position="101"/>
    </location>
</feature>
<feature type="turn" evidence="3">
    <location>
        <begin position="102"/>
        <end position="104"/>
    </location>
</feature>
<feature type="strand" evidence="3">
    <location>
        <begin position="106"/>
        <end position="112"/>
    </location>
</feature>
<dbReference type="EMBL" id="AE016830">
    <property type="protein sequence ID" value="AAO80100.1"/>
    <property type="molecule type" value="Genomic_DNA"/>
</dbReference>
<dbReference type="RefSeq" id="NP_814029.1">
    <property type="nucleotide sequence ID" value="NC_004668.1"/>
</dbReference>
<dbReference type="RefSeq" id="WP_002356226.1">
    <property type="nucleotide sequence ID" value="NZ_KE136524.1"/>
</dbReference>
<dbReference type="PDB" id="6WUB">
    <property type="method" value="EM"/>
    <property type="resolution" value="3.20 A"/>
    <property type="chains" value="k=13-129"/>
</dbReference>
<dbReference type="PDB" id="7P7Q">
    <property type="method" value="EM"/>
    <property type="resolution" value="2.40 A"/>
    <property type="chains" value="l=1-129"/>
</dbReference>
<dbReference type="PDB" id="7P7R">
    <property type="method" value="EM"/>
    <property type="resolution" value="2.90 A"/>
    <property type="chains" value="l=1-129"/>
</dbReference>
<dbReference type="PDBsum" id="6WUB"/>
<dbReference type="PDBsum" id="7P7Q"/>
<dbReference type="PDBsum" id="7P7R"/>
<dbReference type="EMDB" id="EMD-13241"/>
<dbReference type="EMDB" id="EMD-13242"/>
<dbReference type="SMR" id="Q839E0"/>
<dbReference type="STRING" id="226185.EF_0232"/>
<dbReference type="EnsemblBacteria" id="AAO80100">
    <property type="protein sequence ID" value="AAO80100"/>
    <property type="gene ID" value="EF_0232"/>
</dbReference>
<dbReference type="GeneID" id="60892726"/>
<dbReference type="KEGG" id="efa:EF0232"/>
<dbReference type="PATRIC" id="fig|226185.45.peg.35"/>
<dbReference type="eggNOG" id="COG0100">
    <property type="taxonomic scope" value="Bacteria"/>
</dbReference>
<dbReference type="HOGENOM" id="CLU_072439_5_0_9"/>
<dbReference type="Proteomes" id="UP000001415">
    <property type="component" value="Chromosome"/>
</dbReference>
<dbReference type="GO" id="GO:1990904">
    <property type="term" value="C:ribonucleoprotein complex"/>
    <property type="evidence" value="ECO:0007669"/>
    <property type="project" value="UniProtKB-KW"/>
</dbReference>
<dbReference type="GO" id="GO:0005840">
    <property type="term" value="C:ribosome"/>
    <property type="evidence" value="ECO:0007669"/>
    <property type="project" value="UniProtKB-KW"/>
</dbReference>
<dbReference type="GO" id="GO:0019843">
    <property type="term" value="F:rRNA binding"/>
    <property type="evidence" value="ECO:0007669"/>
    <property type="project" value="UniProtKB-UniRule"/>
</dbReference>
<dbReference type="GO" id="GO:0003735">
    <property type="term" value="F:structural constituent of ribosome"/>
    <property type="evidence" value="ECO:0007669"/>
    <property type="project" value="InterPro"/>
</dbReference>
<dbReference type="GO" id="GO:0006412">
    <property type="term" value="P:translation"/>
    <property type="evidence" value="ECO:0007669"/>
    <property type="project" value="UniProtKB-UniRule"/>
</dbReference>
<dbReference type="FunFam" id="3.30.420.80:FF:000001">
    <property type="entry name" value="30S ribosomal protein S11"/>
    <property type="match status" value="1"/>
</dbReference>
<dbReference type="Gene3D" id="3.30.420.80">
    <property type="entry name" value="Ribosomal protein S11"/>
    <property type="match status" value="1"/>
</dbReference>
<dbReference type="HAMAP" id="MF_01310">
    <property type="entry name" value="Ribosomal_uS11"/>
    <property type="match status" value="1"/>
</dbReference>
<dbReference type="InterPro" id="IPR001971">
    <property type="entry name" value="Ribosomal_uS11"/>
</dbReference>
<dbReference type="InterPro" id="IPR019981">
    <property type="entry name" value="Ribosomal_uS11_bac-type"/>
</dbReference>
<dbReference type="InterPro" id="IPR018102">
    <property type="entry name" value="Ribosomal_uS11_CS"/>
</dbReference>
<dbReference type="InterPro" id="IPR036967">
    <property type="entry name" value="Ribosomal_uS11_sf"/>
</dbReference>
<dbReference type="NCBIfam" id="NF003698">
    <property type="entry name" value="PRK05309.1"/>
    <property type="match status" value="1"/>
</dbReference>
<dbReference type="NCBIfam" id="TIGR03632">
    <property type="entry name" value="uS11_bact"/>
    <property type="match status" value="1"/>
</dbReference>
<dbReference type="PANTHER" id="PTHR11759">
    <property type="entry name" value="40S RIBOSOMAL PROTEIN S14/30S RIBOSOMAL PROTEIN S11"/>
    <property type="match status" value="1"/>
</dbReference>
<dbReference type="Pfam" id="PF00411">
    <property type="entry name" value="Ribosomal_S11"/>
    <property type="match status" value="1"/>
</dbReference>
<dbReference type="PIRSF" id="PIRSF002131">
    <property type="entry name" value="Ribosomal_S11"/>
    <property type="match status" value="1"/>
</dbReference>
<dbReference type="SUPFAM" id="SSF53137">
    <property type="entry name" value="Translational machinery components"/>
    <property type="match status" value="1"/>
</dbReference>
<dbReference type="PROSITE" id="PS00054">
    <property type="entry name" value="RIBOSOMAL_S11"/>
    <property type="match status" value="1"/>
</dbReference>
<evidence type="ECO:0000255" key="1">
    <source>
        <dbReference type="HAMAP-Rule" id="MF_01310"/>
    </source>
</evidence>
<evidence type="ECO:0000305" key="2"/>
<evidence type="ECO:0007829" key="3">
    <source>
        <dbReference type="PDB" id="6WUB"/>
    </source>
</evidence>
<name>RS11_ENTFA</name>